<dbReference type="EC" id="4.2.1.33" evidence="1"/>
<dbReference type="EMBL" id="CP001620">
    <property type="protein sequence ID" value="ACR17955.1"/>
    <property type="molecule type" value="Genomic_DNA"/>
</dbReference>
<dbReference type="RefSeq" id="WP_012731842.1">
    <property type="nucleotide sequence ID" value="NC_012704.1"/>
</dbReference>
<dbReference type="SMR" id="C4LJF0"/>
<dbReference type="STRING" id="645127.ckrop_1210"/>
<dbReference type="KEGG" id="ckp:ckrop_1210"/>
<dbReference type="eggNOG" id="COG0066">
    <property type="taxonomic scope" value="Bacteria"/>
</dbReference>
<dbReference type="HOGENOM" id="CLU_081378_0_1_11"/>
<dbReference type="OrthoDB" id="9777465at2"/>
<dbReference type="UniPathway" id="UPA00048">
    <property type="reaction ID" value="UER00071"/>
</dbReference>
<dbReference type="Proteomes" id="UP000001473">
    <property type="component" value="Chromosome"/>
</dbReference>
<dbReference type="GO" id="GO:0009316">
    <property type="term" value="C:3-isopropylmalate dehydratase complex"/>
    <property type="evidence" value="ECO:0007669"/>
    <property type="project" value="InterPro"/>
</dbReference>
<dbReference type="GO" id="GO:0003861">
    <property type="term" value="F:3-isopropylmalate dehydratase activity"/>
    <property type="evidence" value="ECO:0007669"/>
    <property type="project" value="UniProtKB-UniRule"/>
</dbReference>
<dbReference type="GO" id="GO:0009098">
    <property type="term" value="P:L-leucine biosynthetic process"/>
    <property type="evidence" value="ECO:0007669"/>
    <property type="project" value="UniProtKB-UniRule"/>
</dbReference>
<dbReference type="CDD" id="cd01577">
    <property type="entry name" value="IPMI_Swivel"/>
    <property type="match status" value="1"/>
</dbReference>
<dbReference type="FunFam" id="3.20.19.10:FF:000003">
    <property type="entry name" value="3-isopropylmalate dehydratase small subunit"/>
    <property type="match status" value="1"/>
</dbReference>
<dbReference type="Gene3D" id="3.20.19.10">
    <property type="entry name" value="Aconitase, domain 4"/>
    <property type="match status" value="1"/>
</dbReference>
<dbReference type="HAMAP" id="MF_01031">
    <property type="entry name" value="LeuD_type1"/>
    <property type="match status" value="1"/>
</dbReference>
<dbReference type="InterPro" id="IPR004431">
    <property type="entry name" value="3-IsopropMal_deHydase_ssu"/>
</dbReference>
<dbReference type="InterPro" id="IPR015928">
    <property type="entry name" value="Aconitase/3IPM_dehydase_swvl"/>
</dbReference>
<dbReference type="InterPro" id="IPR000573">
    <property type="entry name" value="AconitaseA/IPMdHydase_ssu_swvl"/>
</dbReference>
<dbReference type="InterPro" id="IPR033940">
    <property type="entry name" value="IPMI_Swivel"/>
</dbReference>
<dbReference type="InterPro" id="IPR050075">
    <property type="entry name" value="LeuD"/>
</dbReference>
<dbReference type="NCBIfam" id="TIGR00171">
    <property type="entry name" value="leuD"/>
    <property type="match status" value="1"/>
</dbReference>
<dbReference type="NCBIfam" id="NF002458">
    <property type="entry name" value="PRK01641.1"/>
    <property type="match status" value="1"/>
</dbReference>
<dbReference type="PANTHER" id="PTHR43345:SF5">
    <property type="entry name" value="3-ISOPROPYLMALATE DEHYDRATASE SMALL SUBUNIT"/>
    <property type="match status" value="1"/>
</dbReference>
<dbReference type="PANTHER" id="PTHR43345">
    <property type="entry name" value="3-ISOPROPYLMALATE DEHYDRATASE SMALL SUBUNIT 2-RELATED-RELATED"/>
    <property type="match status" value="1"/>
</dbReference>
<dbReference type="Pfam" id="PF00694">
    <property type="entry name" value="Aconitase_C"/>
    <property type="match status" value="1"/>
</dbReference>
<dbReference type="SUPFAM" id="SSF52016">
    <property type="entry name" value="LeuD/IlvD-like"/>
    <property type="match status" value="1"/>
</dbReference>
<proteinExistence type="inferred from homology"/>
<keyword id="KW-0028">Amino-acid biosynthesis</keyword>
<keyword id="KW-0100">Branched-chain amino acid biosynthesis</keyword>
<keyword id="KW-0432">Leucine biosynthesis</keyword>
<keyword id="KW-0456">Lyase</keyword>
<keyword id="KW-1185">Reference proteome</keyword>
<comment type="function">
    <text evidence="1">Catalyzes the isomerization between 2-isopropylmalate and 3-isopropylmalate, via the formation of 2-isopropylmaleate.</text>
</comment>
<comment type="catalytic activity">
    <reaction evidence="1">
        <text>(2R,3S)-3-isopropylmalate = (2S)-2-isopropylmalate</text>
        <dbReference type="Rhea" id="RHEA:32287"/>
        <dbReference type="ChEBI" id="CHEBI:1178"/>
        <dbReference type="ChEBI" id="CHEBI:35121"/>
        <dbReference type="EC" id="4.2.1.33"/>
    </reaction>
</comment>
<comment type="pathway">
    <text evidence="1">Amino-acid biosynthesis; L-leucine biosynthesis; L-leucine from 3-methyl-2-oxobutanoate: step 2/4.</text>
</comment>
<comment type="subunit">
    <text evidence="1">Heterodimer of LeuC and LeuD.</text>
</comment>
<comment type="similarity">
    <text evidence="1">Belongs to the LeuD family. LeuD type 1 subfamily.</text>
</comment>
<name>LEUD_CORK4</name>
<evidence type="ECO:0000255" key="1">
    <source>
        <dbReference type="HAMAP-Rule" id="MF_01031"/>
    </source>
</evidence>
<accession>C4LJF0</accession>
<reference key="1">
    <citation type="journal article" date="2008" name="J. Biotechnol.">
        <title>Ultrafast pyrosequencing of Corynebacterium kroppenstedtii DSM44385 revealed insights into the physiology of a lipophilic corynebacterium that lacks mycolic acids.</title>
        <authorList>
            <person name="Tauch A."/>
            <person name="Schneider J."/>
            <person name="Szczepanowski R."/>
            <person name="Tilker A."/>
            <person name="Viehoever P."/>
            <person name="Gartemann K.-H."/>
            <person name="Arnold W."/>
            <person name="Blom J."/>
            <person name="Brinkrolf K."/>
            <person name="Brune I."/>
            <person name="Goetker S."/>
            <person name="Weisshaar B."/>
            <person name="Goesmann A."/>
            <person name="Droege M."/>
            <person name="Puehler A."/>
        </authorList>
    </citation>
    <scope>NUCLEOTIDE SEQUENCE [LARGE SCALE GENOMIC DNA]</scope>
    <source>
        <strain>DSM 44385 / JCM 11950 / CIP 105744 / CCUG 35717</strain>
    </source>
</reference>
<organism>
    <name type="scientific">Corynebacterium kroppenstedtii (strain DSM 44385 / JCM 11950 / CIP 105744 / CCUG 35717)</name>
    <dbReference type="NCBI Taxonomy" id="645127"/>
    <lineage>
        <taxon>Bacteria</taxon>
        <taxon>Bacillati</taxon>
        <taxon>Actinomycetota</taxon>
        <taxon>Actinomycetes</taxon>
        <taxon>Mycobacteriales</taxon>
        <taxon>Corynebacteriaceae</taxon>
        <taxon>Corynebacterium</taxon>
    </lineage>
</organism>
<protein>
    <recommendedName>
        <fullName evidence="1">3-isopropylmalate dehydratase small subunit</fullName>
        <ecNumber evidence="1">4.2.1.33</ecNumber>
    </recommendedName>
    <alternativeName>
        <fullName evidence="1">Alpha-IPM isomerase</fullName>
        <shortName evidence="1">IPMI</shortName>
    </alternativeName>
    <alternativeName>
        <fullName evidence="1">Isopropylmalate isomerase</fullName>
    </alternativeName>
</protein>
<feature type="chain" id="PRO_1000213347" description="3-isopropylmalate dehydratase small subunit">
    <location>
        <begin position="1"/>
        <end position="195"/>
    </location>
</feature>
<sequence length="195" mass="22092">MEQFISHTGVGVPLRRSNVDTDQIIPAVYLKRVTRTGFEDGLFARWREDPDFVLNQDTYKNGSILVAGPDFGTGSSREHAAWALMDYGFRVVISARFADIFRGNAGKNGLVAAQMTEEDIELIWKLLDEQPGRTMTVDLEERTVTVGDAVFGFDIDDHTRWRLMEGLDDIALTLRNEDAITQYEKSRSPFMPRTI</sequence>
<gene>
    <name evidence="1" type="primary">leuD</name>
    <name type="ordered locus">ckrop_1210</name>
</gene>